<accession>P16863</accession>
<accession>Q6GNU5</accession>
<evidence type="ECO:0000250" key="1">
    <source>
        <dbReference type="UniProtKB" id="O57474"/>
    </source>
</evidence>
<evidence type="ECO:0000250" key="2">
    <source>
        <dbReference type="UniProtKB" id="P08050"/>
    </source>
</evidence>
<evidence type="ECO:0000250" key="3">
    <source>
        <dbReference type="UniProtKB" id="P17302"/>
    </source>
</evidence>
<evidence type="ECO:0000250" key="4">
    <source>
        <dbReference type="UniProtKB" id="P23242"/>
    </source>
</evidence>
<evidence type="ECO:0000255" key="5"/>
<evidence type="ECO:0000256" key="6">
    <source>
        <dbReference type="SAM" id="MobiDB-lite"/>
    </source>
</evidence>
<evidence type="ECO:0000305" key="7"/>
<sequence length="379" mass="42961">MGDWSALGRLLDKVQAYSTAGGKVWLSVLFIFRILLLGTAVESAWGDEQSAFVCNTQQPGCENVCYDKSFPISHVRFWVLQIIFVSTPTLLYLAHVFYLMRKEEKLNRKEEELKMVQNEGGNVDMHLKQIEIKKFKYGLEEHGKVKMRGGLLRTYIISILFKSVFEVGFIIIQWYMYGFSLSAIYTCKRDPCPHQVDCFLSRPTEKTIFIWFMLIVSIVSLALNIIELFYVTYKSIKDGIKGKKDPFSATNDAVISGKECGSPKYAYFNGCSSPTAPMSPPGYKLVTGERNPSSCRNYNKQASEQNWANYSAEQNRMGQAGSTISNTHAQPFDFSDEHQNTKKMAPGHEMQPLTILDQRPSSRASSHASSRPRPDDLEI</sequence>
<protein>
    <recommendedName>
        <fullName>Gap junction alpha-1 protein</fullName>
    </recommendedName>
    <alternativeName>
        <fullName>Connexin-43</fullName>
        <shortName>Cx43</shortName>
    </alternativeName>
</protein>
<reference key="1">
    <citation type="journal article" date="1990" name="J. Cell Biol.">
        <title>Differential regulation of the levels of three gap junction mRNAs in Xenopus embryos.</title>
        <authorList>
            <person name="Gimlich R.L."/>
            <person name="Kumar N.M."/>
            <person name="Gilula N.B."/>
        </authorList>
    </citation>
    <scope>NUCLEOTIDE SEQUENCE [MRNA]</scope>
    <source>
        <tissue>Ovary</tissue>
    </source>
</reference>
<reference key="2">
    <citation type="submission" date="2004-06" db="EMBL/GenBank/DDBJ databases">
        <authorList>
            <consortium name="NIH - Xenopus Gene Collection (XGC) project"/>
        </authorList>
    </citation>
    <scope>NUCLEOTIDE SEQUENCE [LARGE SCALE MRNA]</scope>
    <source>
        <tissue>Embryo</tissue>
    </source>
</reference>
<feature type="initiator methionine" description="Removed" evidence="2">
    <location>
        <position position="1"/>
    </location>
</feature>
<feature type="chain" id="PRO_0000057806" description="Gap junction alpha-1 protein">
    <location>
        <begin position="2"/>
        <end position="379"/>
    </location>
</feature>
<feature type="topological domain" description="Cytoplasmic" evidence="2">
    <location>
        <begin position="2"/>
        <end position="23"/>
    </location>
</feature>
<feature type="transmembrane region" description="Helical" evidence="5">
    <location>
        <begin position="24"/>
        <end position="44"/>
    </location>
</feature>
<feature type="topological domain" description="Extracellular" evidence="2">
    <location>
        <begin position="45"/>
        <end position="76"/>
    </location>
</feature>
<feature type="transmembrane region" description="Helical" evidence="5">
    <location>
        <begin position="77"/>
        <end position="97"/>
    </location>
</feature>
<feature type="topological domain" description="Cytoplasmic" evidence="2">
    <location>
        <begin position="98"/>
        <end position="163"/>
    </location>
</feature>
<feature type="transmembrane region" description="Helical" evidence="5">
    <location>
        <begin position="164"/>
        <end position="184"/>
    </location>
</feature>
<feature type="topological domain" description="Extracellular" evidence="2">
    <location>
        <begin position="185"/>
        <end position="207"/>
    </location>
</feature>
<feature type="transmembrane region" description="Helical" evidence="5">
    <location>
        <begin position="208"/>
        <end position="228"/>
    </location>
</feature>
<feature type="topological domain" description="Cytoplasmic" evidence="2">
    <location>
        <begin position="229"/>
        <end position="379"/>
    </location>
</feature>
<feature type="region of interest" description="Disordered" evidence="6">
    <location>
        <begin position="322"/>
        <end position="379"/>
    </location>
</feature>
<feature type="compositionally biased region" description="Low complexity" evidence="6">
    <location>
        <begin position="359"/>
        <end position="371"/>
    </location>
</feature>
<feature type="disulfide bond" evidence="3">
    <location>
        <begin position="54"/>
        <end position="192"/>
    </location>
</feature>
<feature type="disulfide bond" evidence="3">
    <location>
        <begin position="187"/>
        <end position="198"/>
    </location>
</feature>
<comment type="function">
    <text evidence="1 4">One gap junction consists of a cluster of closely packed pairs of transmembrane channels, the connexons, through which materials of low MW diffuse from one cell to a neighboring cell. Plays an essential role in gap junction communication in the ventricles.</text>
</comment>
<comment type="subunit">
    <text evidence="4">A connexon is composed of a hexamer of connexins. Interacts with TMEM65.</text>
</comment>
<comment type="subcellular location">
    <subcellularLocation>
        <location evidence="3">Cell membrane</location>
        <topology evidence="5">Multi-pass membrane protein</topology>
    </subcellularLocation>
    <subcellularLocation>
        <location evidence="3">Cell junction</location>
        <location evidence="3">Gap junction</location>
    </subcellularLocation>
    <text evidence="4">Localizes at the intercalated disk (ICD) in cardiomyocytes and proper localization at ICD is dependent on TMEM65.</text>
</comment>
<comment type="tissue specificity">
    <text>Expressed in most tissues. Highest levels found in eye and brain.</text>
</comment>
<comment type="developmental stage">
    <text>Appears during organogenesis.</text>
</comment>
<comment type="similarity">
    <text evidence="7">Belongs to the connexin family. Alpha-type (group II) subfamily.</text>
</comment>
<name>CXA1_XENLA</name>
<organism>
    <name type="scientific">Xenopus laevis</name>
    <name type="common">African clawed frog</name>
    <dbReference type="NCBI Taxonomy" id="8355"/>
    <lineage>
        <taxon>Eukaryota</taxon>
        <taxon>Metazoa</taxon>
        <taxon>Chordata</taxon>
        <taxon>Craniata</taxon>
        <taxon>Vertebrata</taxon>
        <taxon>Euteleostomi</taxon>
        <taxon>Amphibia</taxon>
        <taxon>Batrachia</taxon>
        <taxon>Anura</taxon>
        <taxon>Pipoidea</taxon>
        <taxon>Pipidae</taxon>
        <taxon>Xenopodinae</taxon>
        <taxon>Xenopus</taxon>
        <taxon>Xenopus</taxon>
    </lineage>
</organism>
<proteinExistence type="evidence at transcript level"/>
<dbReference type="EMBL" id="X17243">
    <property type="protein sequence ID" value="CAA35108.1"/>
    <property type="molecule type" value="mRNA"/>
</dbReference>
<dbReference type="EMBL" id="BC073407">
    <property type="protein sequence ID" value="AAH73407.1"/>
    <property type="molecule type" value="mRNA"/>
</dbReference>
<dbReference type="PIR" id="A34575">
    <property type="entry name" value="A34575"/>
</dbReference>
<dbReference type="RefSeq" id="NP_001079129.1">
    <property type="nucleotide sequence ID" value="NM_001085660.1"/>
</dbReference>
<dbReference type="RefSeq" id="XP_018117108.1">
    <property type="nucleotide sequence ID" value="XM_018261619.1"/>
</dbReference>
<dbReference type="SMR" id="P16863"/>
<dbReference type="DNASU" id="373664"/>
<dbReference type="GeneID" id="373664"/>
<dbReference type="KEGG" id="xla:373664"/>
<dbReference type="AGR" id="Xenbase:XB-GENE-876609"/>
<dbReference type="CTD" id="373664"/>
<dbReference type="Xenbase" id="XB-GENE-876609">
    <property type="gene designation" value="gja1.L"/>
</dbReference>
<dbReference type="OMA" id="FWVLQFI"/>
<dbReference type="OrthoDB" id="8773830at2759"/>
<dbReference type="Proteomes" id="UP000186698">
    <property type="component" value="Chromosome 5L"/>
</dbReference>
<dbReference type="Bgee" id="373664">
    <property type="expression patterns" value="Expressed in brain and 16 other cell types or tissues"/>
</dbReference>
<dbReference type="GO" id="GO:0016324">
    <property type="term" value="C:apical plasma membrane"/>
    <property type="evidence" value="ECO:0000250"/>
    <property type="project" value="UniProtKB"/>
</dbReference>
<dbReference type="GO" id="GO:0030054">
    <property type="term" value="C:cell junction"/>
    <property type="evidence" value="ECO:0000250"/>
    <property type="project" value="UniProtKB"/>
</dbReference>
<dbReference type="GO" id="GO:0005922">
    <property type="term" value="C:connexin complex"/>
    <property type="evidence" value="ECO:0000250"/>
    <property type="project" value="UniProtKB"/>
</dbReference>
<dbReference type="GO" id="GO:0014704">
    <property type="term" value="C:intercalated disc"/>
    <property type="evidence" value="ECO:0000250"/>
    <property type="project" value="UniProtKB"/>
</dbReference>
<dbReference type="GO" id="GO:0005739">
    <property type="term" value="C:mitochondrion"/>
    <property type="evidence" value="ECO:0000250"/>
    <property type="project" value="UniProtKB"/>
</dbReference>
<dbReference type="GO" id="GO:0005634">
    <property type="term" value="C:nucleus"/>
    <property type="evidence" value="ECO:0000314"/>
    <property type="project" value="UniProtKB"/>
</dbReference>
<dbReference type="GO" id="GO:0005886">
    <property type="term" value="C:plasma membrane"/>
    <property type="evidence" value="ECO:0000250"/>
    <property type="project" value="UniProtKB"/>
</dbReference>
<dbReference type="GO" id="GO:0005243">
    <property type="term" value="F:gap junction channel activity"/>
    <property type="evidence" value="ECO:0000318"/>
    <property type="project" value="GO_Central"/>
</dbReference>
<dbReference type="GO" id="GO:0055077">
    <property type="term" value="F:gap junction hemi-channel activity"/>
    <property type="evidence" value="ECO:0000250"/>
    <property type="project" value="UniProtKB"/>
</dbReference>
<dbReference type="GO" id="GO:0010644">
    <property type="term" value="P:cell communication by electrical coupling"/>
    <property type="evidence" value="ECO:0000318"/>
    <property type="project" value="GO_Central"/>
</dbReference>
<dbReference type="GO" id="GO:0007267">
    <property type="term" value="P:cell-cell signaling"/>
    <property type="evidence" value="ECO:0000318"/>
    <property type="project" value="GO_Central"/>
</dbReference>
<dbReference type="GO" id="GO:0007507">
    <property type="term" value="P:heart development"/>
    <property type="evidence" value="ECO:0000318"/>
    <property type="project" value="GO_Central"/>
</dbReference>
<dbReference type="GO" id="GO:0099111">
    <property type="term" value="P:microtubule-based transport"/>
    <property type="evidence" value="ECO:0000250"/>
    <property type="project" value="UniProtKB"/>
</dbReference>
<dbReference type="GO" id="GO:0001755">
    <property type="term" value="P:neural crest cell migration"/>
    <property type="evidence" value="ECO:0000315"/>
    <property type="project" value="UniProtKB"/>
</dbReference>
<dbReference type="GO" id="GO:0045944">
    <property type="term" value="P:positive regulation of transcription by RNA polymerase II"/>
    <property type="evidence" value="ECO:0000315"/>
    <property type="project" value="UniProtKB"/>
</dbReference>
<dbReference type="FunFam" id="1.20.1440.80:FF:000001">
    <property type="entry name" value="Gap junction alpha-1"/>
    <property type="match status" value="1"/>
</dbReference>
<dbReference type="FunFam" id="1.20.5.1130:FF:000001">
    <property type="entry name" value="Gap junction alpha-1"/>
    <property type="match status" value="1"/>
</dbReference>
<dbReference type="Gene3D" id="1.20.5.1130">
    <property type="entry name" value="Connexin43"/>
    <property type="match status" value="1"/>
</dbReference>
<dbReference type="Gene3D" id="1.20.1440.80">
    <property type="entry name" value="Gap junction channel protein cysteine-rich domain"/>
    <property type="match status" value="1"/>
</dbReference>
<dbReference type="InterPro" id="IPR035091">
    <property type="entry name" value="Alpha_helix_dom_sf"/>
</dbReference>
<dbReference type="InterPro" id="IPR000500">
    <property type="entry name" value="Connexin"/>
</dbReference>
<dbReference type="InterPro" id="IPR002261">
    <property type="entry name" value="Connexin43"/>
</dbReference>
<dbReference type="InterPro" id="IPR013124">
    <property type="entry name" value="Connexin43_C"/>
</dbReference>
<dbReference type="InterPro" id="IPR034634">
    <property type="entry name" value="Connexin_C"/>
</dbReference>
<dbReference type="InterPro" id="IPR019570">
    <property type="entry name" value="Connexin_CCC"/>
</dbReference>
<dbReference type="InterPro" id="IPR017990">
    <property type="entry name" value="Connexin_CS"/>
</dbReference>
<dbReference type="InterPro" id="IPR013092">
    <property type="entry name" value="Connexin_N"/>
</dbReference>
<dbReference type="InterPro" id="IPR038359">
    <property type="entry name" value="Connexin_N_sf"/>
</dbReference>
<dbReference type="PANTHER" id="PTHR11984">
    <property type="entry name" value="CONNEXIN"/>
    <property type="match status" value="1"/>
</dbReference>
<dbReference type="PANTHER" id="PTHR11984:SF33">
    <property type="entry name" value="GAP JUNCTION ALPHA-1 PROTEIN"/>
    <property type="match status" value="1"/>
</dbReference>
<dbReference type="Pfam" id="PF00029">
    <property type="entry name" value="Connexin"/>
    <property type="match status" value="1"/>
</dbReference>
<dbReference type="Pfam" id="PF03508">
    <property type="entry name" value="Connexin43"/>
    <property type="match status" value="1"/>
</dbReference>
<dbReference type="PRINTS" id="PR00206">
    <property type="entry name" value="CONNEXIN"/>
</dbReference>
<dbReference type="PRINTS" id="PR01132">
    <property type="entry name" value="CONNEXINA1"/>
</dbReference>
<dbReference type="SMART" id="SM00037">
    <property type="entry name" value="CNX"/>
    <property type="match status" value="1"/>
</dbReference>
<dbReference type="SMART" id="SM01089">
    <property type="entry name" value="Connexin_CCC"/>
    <property type="match status" value="1"/>
</dbReference>
<dbReference type="SUPFAM" id="SSF118220">
    <property type="entry name" value="Connexin43"/>
    <property type="match status" value="1"/>
</dbReference>
<dbReference type="PROSITE" id="PS00407">
    <property type="entry name" value="CONNEXINS_1"/>
    <property type="match status" value="1"/>
</dbReference>
<dbReference type="PROSITE" id="PS00408">
    <property type="entry name" value="CONNEXINS_2"/>
    <property type="match status" value="1"/>
</dbReference>
<gene>
    <name type="primary">gja1</name>
</gene>
<keyword id="KW-0965">Cell junction</keyword>
<keyword id="KW-1003">Cell membrane</keyword>
<keyword id="KW-1015">Disulfide bond</keyword>
<keyword id="KW-0303">Gap junction</keyword>
<keyword id="KW-0472">Membrane</keyword>
<keyword id="KW-1185">Reference proteome</keyword>
<keyword id="KW-0812">Transmembrane</keyword>
<keyword id="KW-1133">Transmembrane helix</keyword>